<feature type="chain" id="PRO_0000090620" description="Mitochondrial glutamate carrier 1">
    <location>
        <begin position="1"/>
        <end position="323"/>
    </location>
</feature>
<feature type="transmembrane region" description="Helical; Name=1" evidence="3">
    <location>
        <begin position="12"/>
        <end position="32"/>
    </location>
</feature>
<feature type="transmembrane region" description="Helical; Name=2" evidence="3">
    <location>
        <begin position="62"/>
        <end position="82"/>
    </location>
</feature>
<feature type="transmembrane region" description="Helical; Name=3" evidence="3">
    <location>
        <begin position="107"/>
        <end position="127"/>
    </location>
</feature>
<feature type="transmembrane region" description="Helical; Name=4" evidence="3">
    <location>
        <begin position="189"/>
        <end position="209"/>
    </location>
</feature>
<feature type="transmembrane region" description="Helical; Name=5" evidence="3">
    <location>
        <begin position="223"/>
        <end position="243"/>
    </location>
</feature>
<feature type="transmembrane region" description="Helical; Name=6" evidence="3">
    <location>
        <begin position="292"/>
        <end position="312"/>
    </location>
</feature>
<feature type="repeat" description="Solcar 1" evidence="4">
    <location>
        <begin position="6"/>
        <end position="93"/>
    </location>
</feature>
<feature type="repeat" description="Solcar 2" evidence="4">
    <location>
        <begin position="101"/>
        <end position="214"/>
    </location>
</feature>
<feature type="repeat" description="Solcar 3" evidence="4">
    <location>
        <begin position="223"/>
        <end position="312"/>
    </location>
</feature>
<protein>
    <recommendedName>
        <fullName>Mitochondrial glutamate carrier 1</fullName>
        <shortName>GC-1</shortName>
    </recommendedName>
    <alternativeName>
        <fullName>Glutamate/H(+) symporter 1</fullName>
    </alternativeName>
    <alternativeName>
        <fullName>Solute carrier family 25 member 22</fullName>
    </alternativeName>
</protein>
<organism>
    <name type="scientific">Mus musculus</name>
    <name type="common">Mouse</name>
    <dbReference type="NCBI Taxonomy" id="10090"/>
    <lineage>
        <taxon>Eukaryota</taxon>
        <taxon>Metazoa</taxon>
        <taxon>Chordata</taxon>
        <taxon>Craniata</taxon>
        <taxon>Vertebrata</taxon>
        <taxon>Euteleostomi</taxon>
        <taxon>Mammalia</taxon>
        <taxon>Eutheria</taxon>
        <taxon>Euarchontoglires</taxon>
        <taxon>Glires</taxon>
        <taxon>Rodentia</taxon>
        <taxon>Myomorpha</taxon>
        <taxon>Muroidea</taxon>
        <taxon>Muridae</taxon>
        <taxon>Murinae</taxon>
        <taxon>Mus</taxon>
        <taxon>Mus</taxon>
    </lineage>
</organism>
<evidence type="ECO:0000250" key="1">
    <source>
        <dbReference type="UniProtKB" id="A0A0G2K5L2"/>
    </source>
</evidence>
<evidence type="ECO:0000250" key="2">
    <source>
        <dbReference type="UniProtKB" id="Q9H936"/>
    </source>
</evidence>
<evidence type="ECO:0000255" key="3"/>
<evidence type="ECO:0000255" key="4">
    <source>
        <dbReference type="PROSITE-ProRule" id="PRU00282"/>
    </source>
</evidence>
<evidence type="ECO:0000305" key="5"/>
<sequence length="323" mass="34670">MADKQISLPAKLINGGIAGLIGVTCVFPIDLAKTRLQNQQNGQRMYASMSDCLIKTIRSEGYFGMYRGAAVNLTLVTPEKAIKLAANDFFRHQLSKDGQKLTLPKEMLAGCGAGTCQVIVTTPMEMLKIQLQDAGRIAAQRKILAAQAQLSAQGGAQPSVEAPAPPRPTATQLTRDLLRNHGIAGLYKGLGATLLRDVPFSIVYFPLFANLNQLGRPSSEEKSPFYVSFLAGCVAGSAAAVAVNPCDVVKTRLQSLERGVNEDTYSGFLDCARKIWRHEGPSAFLKGAYCRALVIAPLFGIAQVVYFLGIAESLLGLLQEPQA</sequence>
<proteinExistence type="evidence at protein level"/>
<reference key="1">
    <citation type="journal article" date="2005" name="Science">
        <title>The transcriptional landscape of the mammalian genome.</title>
        <authorList>
            <person name="Carninci P."/>
            <person name="Kasukawa T."/>
            <person name="Katayama S."/>
            <person name="Gough J."/>
            <person name="Frith M.C."/>
            <person name="Maeda N."/>
            <person name="Oyama R."/>
            <person name="Ravasi T."/>
            <person name="Lenhard B."/>
            <person name="Wells C."/>
            <person name="Kodzius R."/>
            <person name="Shimokawa K."/>
            <person name="Bajic V.B."/>
            <person name="Brenner S.E."/>
            <person name="Batalov S."/>
            <person name="Forrest A.R."/>
            <person name="Zavolan M."/>
            <person name="Davis M.J."/>
            <person name="Wilming L.G."/>
            <person name="Aidinis V."/>
            <person name="Allen J.E."/>
            <person name="Ambesi-Impiombato A."/>
            <person name="Apweiler R."/>
            <person name="Aturaliya R.N."/>
            <person name="Bailey T.L."/>
            <person name="Bansal M."/>
            <person name="Baxter L."/>
            <person name="Beisel K.W."/>
            <person name="Bersano T."/>
            <person name="Bono H."/>
            <person name="Chalk A.M."/>
            <person name="Chiu K.P."/>
            <person name="Choudhary V."/>
            <person name="Christoffels A."/>
            <person name="Clutterbuck D.R."/>
            <person name="Crowe M.L."/>
            <person name="Dalla E."/>
            <person name="Dalrymple B.P."/>
            <person name="de Bono B."/>
            <person name="Della Gatta G."/>
            <person name="di Bernardo D."/>
            <person name="Down T."/>
            <person name="Engstrom P."/>
            <person name="Fagiolini M."/>
            <person name="Faulkner G."/>
            <person name="Fletcher C.F."/>
            <person name="Fukushima T."/>
            <person name="Furuno M."/>
            <person name="Futaki S."/>
            <person name="Gariboldi M."/>
            <person name="Georgii-Hemming P."/>
            <person name="Gingeras T.R."/>
            <person name="Gojobori T."/>
            <person name="Green R.E."/>
            <person name="Gustincich S."/>
            <person name="Harbers M."/>
            <person name="Hayashi Y."/>
            <person name="Hensch T.K."/>
            <person name="Hirokawa N."/>
            <person name="Hill D."/>
            <person name="Huminiecki L."/>
            <person name="Iacono M."/>
            <person name="Ikeo K."/>
            <person name="Iwama A."/>
            <person name="Ishikawa T."/>
            <person name="Jakt M."/>
            <person name="Kanapin A."/>
            <person name="Katoh M."/>
            <person name="Kawasawa Y."/>
            <person name="Kelso J."/>
            <person name="Kitamura H."/>
            <person name="Kitano H."/>
            <person name="Kollias G."/>
            <person name="Krishnan S.P."/>
            <person name="Kruger A."/>
            <person name="Kummerfeld S.K."/>
            <person name="Kurochkin I.V."/>
            <person name="Lareau L.F."/>
            <person name="Lazarevic D."/>
            <person name="Lipovich L."/>
            <person name="Liu J."/>
            <person name="Liuni S."/>
            <person name="McWilliam S."/>
            <person name="Madan Babu M."/>
            <person name="Madera M."/>
            <person name="Marchionni L."/>
            <person name="Matsuda H."/>
            <person name="Matsuzawa S."/>
            <person name="Miki H."/>
            <person name="Mignone F."/>
            <person name="Miyake S."/>
            <person name="Morris K."/>
            <person name="Mottagui-Tabar S."/>
            <person name="Mulder N."/>
            <person name="Nakano N."/>
            <person name="Nakauchi H."/>
            <person name="Ng P."/>
            <person name="Nilsson R."/>
            <person name="Nishiguchi S."/>
            <person name="Nishikawa S."/>
            <person name="Nori F."/>
            <person name="Ohara O."/>
            <person name="Okazaki Y."/>
            <person name="Orlando V."/>
            <person name="Pang K.C."/>
            <person name="Pavan W.J."/>
            <person name="Pavesi G."/>
            <person name="Pesole G."/>
            <person name="Petrovsky N."/>
            <person name="Piazza S."/>
            <person name="Reed J."/>
            <person name="Reid J.F."/>
            <person name="Ring B.Z."/>
            <person name="Ringwald M."/>
            <person name="Rost B."/>
            <person name="Ruan Y."/>
            <person name="Salzberg S.L."/>
            <person name="Sandelin A."/>
            <person name="Schneider C."/>
            <person name="Schoenbach C."/>
            <person name="Sekiguchi K."/>
            <person name="Semple C.A."/>
            <person name="Seno S."/>
            <person name="Sessa L."/>
            <person name="Sheng Y."/>
            <person name="Shibata Y."/>
            <person name="Shimada H."/>
            <person name="Shimada K."/>
            <person name="Silva D."/>
            <person name="Sinclair B."/>
            <person name="Sperling S."/>
            <person name="Stupka E."/>
            <person name="Sugiura K."/>
            <person name="Sultana R."/>
            <person name="Takenaka Y."/>
            <person name="Taki K."/>
            <person name="Tammoja K."/>
            <person name="Tan S.L."/>
            <person name="Tang S."/>
            <person name="Taylor M.S."/>
            <person name="Tegner J."/>
            <person name="Teichmann S.A."/>
            <person name="Ueda H.R."/>
            <person name="van Nimwegen E."/>
            <person name="Verardo R."/>
            <person name="Wei C.L."/>
            <person name="Yagi K."/>
            <person name="Yamanishi H."/>
            <person name="Zabarovsky E."/>
            <person name="Zhu S."/>
            <person name="Zimmer A."/>
            <person name="Hide W."/>
            <person name="Bult C."/>
            <person name="Grimmond S.M."/>
            <person name="Teasdale R.D."/>
            <person name="Liu E.T."/>
            <person name="Brusic V."/>
            <person name="Quackenbush J."/>
            <person name="Wahlestedt C."/>
            <person name="Mattick J.S."/>
            <person name="Hume D.A."/>
            <person name="Kai C."/>
            <person name="Sasaki D."/>
            <person name="Tomaru Y."/>
            <person name="Fukuda S."/>
            <person name="Kanamori-Katayama M."/>
            <person name="Suzuki M."/>
            <person name="Aoki J."/>
            <person name="Arakawa T."/>
            <person name="Iida J."/>
            <person name="Imamura K."/>
            <person name="Itoh M."/>
            <person name="Kato T."/>
            <person name="Kawaji H."/>
            <person name="Kawagashira N."/>
            <person name="Kawashima T."/>
            <person name="Kojima M."/>
            <person name="Kondo S."/>
            <person name="Konno H."/>
            <person name="Nakano K."/>
            <person name="Ninomiya N."/>
            <person name="Nishio T."/>
            <person name="Okada M."/>
            <person name="Plessy C."/>
            <person name="Shibata K."/>
            <person name="Shiraki T."/>
            <person name="Suzuki S."/>
            <person name="Tagami M."/>
            <person name="Waki K."/>
            <person name="Watahiki A."/>
            <person name="Okamura-Oho Y."/>
            <person name="Suzuki H."/>
            <person name="Kawai J."/>
            <person name="Hayashizaki Y."/>
        </authorList>
    </citation>
    <scope>NUCLEOTIDE SEQUENCE [LARGE SCALE MRNA]</scope>
    <source>
        <strain>C57BL/6J</strain>
        <strain>NOD</strain>
        <tissue>Diencephalon</tissue>
        <tissue>Head</tissue>
        <tissue>Medulla oblongata</tissue>
        <tissue>Tongue</tissue>
    </source>
</reference>
<reference key="2">
    <citation type="journal article" date="2004" name="Genome Res.">
        <title>The status, quality, and expansion of the NIH full-length cDNA project: the Mammalian Gene Collection (MGC).</title>
        <authorList>
            <consortium name="The MGC Project Team"/>
        </authorList>
    </citation>
    <scope>NUCLEOTIDE SEQUENCE [LARGE SCALE MRNA]</scope>
    <source>
        <tissue>Eye</tissue>
    </source>
</reference>
<reference key="3">
    <citation type="submission" date="2007-04" db="UniProtKB">
        <authorList>
            <person name="Lubec G."/>
            <person name="Kang S.U."/>
        </authorList>
    </citation>
    <scope>PROTEIN SEQUENCE OF 12-33; 59-80; 84-91; 129-136; 180-196; 259-273 AND 278-286</scope>
    <scope>IDENTIFICATION BY MASS SPECTROMETRY</scope>
    <source>
        <strain>C57BL/6J</strain>
        <tissue>Brain</tissue>
    </source>
</reference>
<reference key="4">
    <citation type="journal article" date="2010" name="Cell">
        <title>A tissue-specific atlas of mouse protein phosphorylation and expression.</title>
        <authorList>
            <person name="Huttlin E.L."/>
            <person name="Jedrychowski M.P."/>
            <person name="Elias J.E."/>
            <person name="Goswami T."/>
            <person name="Rad R."/>
            <person name="Beausoleil S.A."/>
            <person name="Villen J."/>
            <person name="Haas W."/>
            <person name="Sowa M.E."/>
            <person name="Gygi S.P."/>
        </authorList>
    </citation>
    <scope>IDENTIFICATION BY MASS SPECTROMETRY [LARGE SCALE ANALYSIS]</scope>
    <source>
        <tissue>Brain</tissue>
        <tissue>Brown adipose tissue</tissue>
        <tissue>Heart</tissue>
        <tissue>Kidney</tissue>
        <tissue>Liver</tissue>
        <tissue>Lung</tissue>
        <tissue>Pancreas</tissue>
        <tissue>Spleen</tissue>
    </source>
</reference>
<keyword id="KW-0903">Direct protein sequencing</keyword>
<keyword id="KW-0472">Membrane</keyword>
<keyword id="KW-0496">Mitochondrion</keyword>
<keyword id="KW-0999">Mitochondrion inner membrane</keyword>
<keyword id="KW-1185">Reference proteome</keyword>
<keyword id="KW-0677">Repeat</keyword>
<keyword id="KW-0769">Symport</keyword>
<keyword id="KW-0812">Transmembrane</keyword>
<keyword id="KW-1133">Transmembrane helix</keyword>
<keyword id="KW-0813">Transport</keyword>
<dbReference type="EMBL" id="AK010193">
    <property type="protein sequence ID" value="BAB26760.1"/>
    <property type="molecule type" value="mRNA"/>
</dbReference>
<dbReference type="EMBL" id="AK046874">
    <property type="protein sequence ID" value="BAC32903.1"/>
    <property type="molecule type" value="mRNA"/>
</dbReference>
<dbReference type="EMBL" id="AK048389">
    <property type="protein sequence ID" value="BAC33318.1"/>
    <property type="molecule type" value="mRNA"/>
</dbReference>
<dbReference type="EMBL" id="AK049313">
    <property type="protein sequence ID" value="BAC33676.1"/>
    <property type="molecule type" value="mRNA"/>
</dbReference>
<dbReference type="EMBL" id="AK155276">
    <property type="protein sequence ID" value="BAE33159.1"/>
    <property type="molecule type" value="mRNA"/>
</dbReference>
<dbReference type="EMBL" id="AK162400">
    <property type="protein sequence ID" value="BAE36895.1"/>
    <property type="molecule type" value="mRNA"/>
</dbReference>
<dbReference type="EMBL" id="BC037949">
    <property type="protein sequence ID" value="AAH37949.1"/>
    <property type="molecule type" value="mRNA"/>
</dbReference>
<dbReference type="CCDS" id="CCDS22013.1"/>
<dbReference type="RefSeq" id="NP_001171047.1">
    <property type="nucleotide sequence ID" value="NM_001177576.1"/>
</dbReference>
<dbReference type="RefSeq" id="NP_001347652.1">
    <property type="nucleotide sequence ID" value="NM_001360723.1"/>
</dbReference>
<dbReference type="RefSeq" id="NP_080922.1">
    <property type="nucleotide sequence ID" value="NM_026646.3"/>
</dbReference>
<dbReference type="RefSeq" id="XP_006536295.1">
    <property type="nucleotide sequence ID" value="XM_006536232.1"/>
</dbReference>
<dbReference type="RefSeq" id="XP_006536296.1">
    <property type="nucleotide sequence ID" value="XM_006536233.3"/>
</dbReference>
<dbReference type="RefSeq" id="XP_030098808.1">
    <property type="nucleotide sequence ID" value="XM_030242948.1"/>
</dbReference>
<dbReference type="RefSeq" id="XP_030098809.1">
    <property type="nucleotide sequence ID" value="XM_030242949.2"/>
</dbReference>
<dbReference type="RefSeq" id="XP_030098810.1">
    <property type="nucleotide sequence ID" value="XM_030242950.1"/>
</dbReference>
<dbReference type="SMR" id="Q9D6M3"/>
<dbReference type="BioGRID" id="212770">
    <property type="interactions" value="20"/>
</dbReference>
<dbReference type="FunCoup" id="Q9D6M3">
    <property type="interactions" value="810"/>
</dbReference>
<dbReference type="IntAct" id="Q9D6M3">
    <property type="interactions" value="7"/>
</dbReference>
<dbReference type="MINT" id="Q9D6M3"/>
<dbReference type="STRING" id="10090.ENSMUSP00000019226"/>
<dbReference type="GlyGen" id="Q9D6M3">
    <property type="glycosylation" value="2 sites, 1 N-linked glycan (1 site), 1 O-linked glycan (1 site)"/>
</dbReference>
<dbReference type="iPTMnet" id="Q9D6M3"/>
<dbReference type="PhosphoSitePlus" id="Q9D6M3"/>
<dbReference type="SwissPalm" id="Q9D6M3"/>
<dbReference type="jPOST" id="Q9D6M3"/>
<dbReference type="PaxDb" id="10090-ENSMUSP00000019226"/>
<dbReference type="PeptideAtlas" id="Q9D6M3"/>
<dbReference type="ProteomicsDB" id="271218"/>
<dbReference type="Pumba" id="Q9D6M3"/>
<dbReference type="Antibodypedia" id="9992">
    <property type="antibodies" value="64 antibodies from 22 providers"/>
</dbReference>
<dbReference type="DNASU" id="68267"/>
<dbReference type="Ensembl" id="ENSMUST00000019226.14">
    <property type="protein sequence ID" value="ENSMUSP00000019226.8"/>
    <property type="gene ID" value="ENSMUSG00000019082.19"/>
</dbReference>
<dbReference type="Ensembl" id="ENSMUST00000106007.10">
    <property type="protein sequence ID" value="ENSMUSP00000101629.4"/>
    <property type="gene ID" value="ENSMUSG00000019082.19"/>
</dbReference>
<dbReference type="Ensembl" id="ENSMUST00000201710.4">
    <property type="protein sequence ID" value="ENSMUSP00000144231.2"/>
    <property type="gene ID" value="ENSMUSG00000019082.19"/>
</dbReference>
<dbReference type="GeneID" id="68267"/>
<dbReference type="KEGG" id="mmu:68267"/>
<dbReference type="UCSC" id="uc009kkz.2">
    <property type="organism name" value="mouse"/>
</dbReference>
<dbReference type="AGR" id="MGI:1915517"/>
<dbReference type="CTD" id="79751"/>
<dbReference type="MGI" id="MGI:1915517">
    <property type="gene designation" value="Slc25a22"/>
</dbReference>
<dbReference type="VEuPathDB" id="HostDB:ENSMUSG00000019082"/>
<dbReference type="eggNOG" id="KOG0750">
    <property type="taxonomic scope" value="Eukaryota"/>
</dbReference>
<dbReference type="GeneTree" id="ENSGT00940000161196"/>
<dbReference type="InParanoid" id="Q9D6M3"/>
<dbReference type="OMA" id="QRLYTSM"/>
<dbReference type="OrthoDB" id="2382881at2759"/>
<dbReference type="PhylomeDB" id="Q9D6M3"/>
<dbReference type="TreeFam" id="TF313209"/>
<dbReference type="Reactome" id="R-MMU-428643">
    <property type="pathway name" value="Organic anion transporters"/>
</dbReference>
<dbReference type="Reactome" id="R-MMU-9856872">
    <property type="pathway name" value="Malate-aspartate shuttle"/>
</dbReference>
<dbReference type="BioGRID-ORCS" id="68267">
    <property type="hits" value="13 hits in 81 CRISPR screens"/>
</dbReference>
<dbReference type="CD-CODE" id="CE726F99">
    <property type="entry name" value="Postsynaptic density"/>
</dbReference>
<dbReference type="ChiTaRS" id="Slc25a22">
    <property type="organism name" value="mouse"/>
</dbReference>
<dbReference type="PRO" id="PR:Q9D6M3"/>
<dbReference type="Proteomes" id="UP000000589">
    <property type="component" value="Chromosome 7"/>
</dbReference>
<dbReference type="RNAct" id="Q9D6M3">
    <property type="molecule type" value="protein"/>
</dbReference>
<dbReference type="Bgee" id="ENSMUSG00000019082">
    <property type="expression patterns" value="Expressed in dentate gyrus of hippocampal formation granule cell and 250 other cell types or tissues"/>
</dbReference>
<dbReference type="ExpressionAtlas" id="Q9D6M3">
    <property type="expression patterns" value="baseline and differential"/>
</dbReference>
<dbReference type="GO" id="GO:0005743">
    <property type="term" value="C:mitochondrial inner membrane"/>
    <property type="evidence" value="ECO:0000250"/>
    <property type="project" value="UniProtKB"/>
</dbReference>
<dbReference type="GO" id="GO:0005739">
    <property type="term" value="C:mitochondrion"/>
    <property type="evidence" value="ECO:0007005"/>
    <property type="project" value="MGI"/>
</dbReference>
<dbReference type="GO" id="GO:0005280">
    <property type="term" value="F:amino acid:proton symporter activity"/>
    <property type="evidence" value="ECO:0000250"/>
    <property type="project" value="UniProtKB"/>
</dbReference>
<dbReference type="GO" id="GO:0005313">
    <property type="term" value="F:L-glutamate transmembrane transporter activity"/>
    <property type="evidence" value="ECO:0000250"/>
    <property type="project" value="UniProtKB"/>
</dbReference>
<dbReference type="GO" id="GO:0015813">
    <property type="term" value="P:L-glutamate transmembrane transport"/>
    <property type="evidence" value="ECO:0000250"/>
    <property type="project" value="UniProtKB"/>
</dbReference>
<dbReference type="GO" id="GO:0050796">
    <property type="term" value="P:regulation of insulin secretion"/>
    <property type="evidence" value="ECO:0000250"/>
    <property type="project" value="UniProtKB"/>
</dbReference>
<dbReference type="FunFam" id="1.50.40.10:FF:000017">
    <property type="entry name" value="Solute carrier family 25 member 22a"/>
    <property type="match status" value="1"/>
</dbReference>
<dbReference type="Gene3D" id="1.50.40.10">
    <property type="entry name" value="Mitochondrial carrier domain"/>
    <property type="match status" value="1"/>
</dbReference>
<dbReference type="InterPro" id="IPR002067">
    <property type="entry name" value="Mit_carrier"/>
</dbReference>
<dbReference type="InterPro" id="IPR051028">
    <property type="entry name" value="Mito_Solute_Carrier"/>
</dbReference>
<dbReference type="InterPro" id="IPR018108">
    <property type="entry name" value="Mitochondrial_sb/sol_carrier"/>
</dbReference>
<dbReference type="InterPro" id="IPR023395">
    <property type="entry name" value="Mt_carrier_dom_sf"/>
</dbReference>
<dbReference type="PANTHER" id="PTHR45678">
    <property type="entry name" value="MITOCHONDRIAL 2-OXODICARBOXYLATE CARRIER 1-RELATED"/>
    <property type="match status" value="1"/>
</dbReference>
<dbReference type="PANTHER" id="PTHR45678:SF3">
    <property type="entry name" value="MITOCHONDRIAL GLUTAMATE CARRIER 1"/>
    <property type="match status" value="1"/>
</dbReference>
<dbReference type="Pfam" id="PF00153">
    <property type="entry name" value="Mito_carr"/>
    <property type="match status" value="3"/>
</dbReference>
<dbReference type="PRINTS" id="PR00926">
    <property type="entry name" value="MITOCARRIER"/>
</dbReference>
<dbReference type="SUPFAM" id="SSF103506">
    <property type="entry name" value="Mitochondrial carrier"/>
    <property type="match status" value="1"/>
</dbReference>
<dbReference type="PROSITE" id="PS50920">
    <property type="entry name" value="SOLCAR"/>
    <property type="match status" value="3"/>
</dbReference>
<name>GHC1_MOUSE</name>
<comment type="function">
    <text evidence="1 2">Mitochondrial glutamate/H(+) symporter. Responsible for the transport of glutamate from the cytosol into the mitochondrial matrix with the concomitant import of a proton (By similarity). Plays a role in the control of glucose-stimulated insulin secretion (By similarity).</text>
</comment>
<comment type="catalytic activity">
    <reaction evidence="2">
        <text>L-glutamate(in) + H(+)(in) = L-glutamate(out) + H(+)(out)</text>
        <dbReference type="Rhea" id="RHEA:70955"/>
        <dbReference type="ChEBI" id="CHEBI:15378"/>
        <dbReference type="ChEBI" id="CHEBI:29985"/>
    </reaction>
</comment>
<comment type="subcellular location">
    <subcellularLocation>
        <location evidence="1">Mitochondrion inner membrane</location>
        <topology evidence="5">Multi-pass membrane protein</topology>
    </subcellularLocation>
</comment>
<comment type="similarity">
    <text evidence="5">Belongs to the mitochondrial carrier (TC 2.A.29) family.</text>
</comment>
<gene>
    <name type="primary">Slc25a22</name>
    <name type="synonym">Gc1</name>
</gene>
<accession>Q9D6M3</accession>
<accession>Q3TRY1</accession>